<proteinExistence type="inferred from homology"/>
<accession>P67170</accession>
<accession>Q8K7U8</accession>
<accession>Q9A070</accession>
<protein>
    <recommendedName>
        <fullName evidence="1">Glycerol-3-phosphate acyltransferase</fullName>
    </recommendedName>
    <alternativeName>
        <fullName evidence="1">Acyl-PO4 G3P acyltransferase</fullName>
    </alternativeName>
    <alternativeName>
        <fullName evidence="1">Acyl-phosphate--glycerol-3-phosphate acyltransferase</fullName>
    </alternativeName>
    <alternativeName>
        <fullName evidence="1">G3P acyltransferase</fullName>
        <shortName evidence="1">GPAT</shortName>
        <ecNumber evidence="1">2.3.1.275</ecNumber>
    </alternativeName>
    <alternativeName>
        <fullName evidence="1">Lysophosphatidic acid synthase</fullName>
        <shortName evidence="1">LPA synthase</shortName>
    </alternativeName>
</protein>
<name>PLSY_STRP8</name>
<sequence length="213" mass="23369">MKLLLFITIAYLLGSIPTGLWIGQYFYHINLREHGSGNTGTTNTFRILGVKAGTATLAIDMFKGTLSILLPIIFGMTSISSIAIGFFAVLGHTFPIFANFKGGKAVATSAGVLLGFAPLYLFFLASIFVLVLYLFSMISLASVVSAIVGVLSVLTFPAIHFLLPNYDYFLTFIVILLAFIIIIRHKDNISRIKHHTENLIPWGLNLSKQVPKK</sequence>
<gene>
    <name evidence="1" type="primary">plsY</name>
    <name type="ordered locus">spyM18_0966</name>
</gene>
<keyword id="KW-1003">Cell membrane</keyword>
<keyword id="KW-0444">Lipid biosynthesis</keyword>
<keyword id="KW-0443">Lipid metabolism</keyword>
<keyword id="KW-0472">Membrane</keyword>
<keyword id="KW-0594">Phospholipid biosynthesis</keyword>
<keyword id="KW-1208">Phospholipid metabolism</keyword>
<keyword id="KW-0808">Transferase</keyword>
<keyword id="KW-0812">Transmembrane</keyword>
<keyword id="KW-1133">Transmembrane helix</keyword>
<feature type="chain" id="PRO_0000188467" description="Glycerol-3-phosphate acyltransferase">
    <location>
        <begin position="1"/>
        <end position="213"/>
    </location>
</feature>
<feature type="transmembrane region" description="Helical" evidence="1">
    <location>
        <begin position="3"/>
        <end position="23"/>
    </location>
</feature>
<feature type="transmembrane region" description="Helical" evidence="1">
    <location>
        <begin position="68"/>
        <end position="88"/>
    </location>
</feature>
<feature type="transmembrane region" description="Helical" evidence="1">
    <location>
        <begin position="112"/>
        <end position="132"/>
    </location>
</feature>
<feature type="transmembrane region" description="Helical" evidence="1">
    <location>
        <begin position="134"/>
        <end position="154"/>
    </location>
</feature>
<feature type="transmembrane region" description="Helical" evidence="1">
    <location>
        <begin position="163"/>
        <end position="183"/>
    </location>
</feature>
<comment type="function">
    <text evidence="1">Catalyzes the transfer of an acyl group from acyl-phosphate (acyl-PO(4)) to glycerol-3-phosphate (G3P) to form lysophosphatidic acid (LPA). This enzyme utilizes acyl-phosphate as fatty acyl donor, but not acyl-CoA or acyl-ACP.</text>
</comment>
<comment type="catalytic activity">
    <reaction evidence="1">
        <text>an acyl phosphate + sn-glycerol 3-phosphate = a 1-acyl-sn-glycero-3-phosphate + phosphate</text>
        <dbReference type="Rhea" id="RHEA:34075"/>
        <dbReference type="ChEBI" id="CHEBI:43474"/>
        <dbReference type="ChEBI" id="CHEBI:57597"/>
        <dbReference type="ChEBI" id="CHEBI:57970"/>
        <dbReference type="ChEBI" id="CHEBI:59918"/>
        <dbReference type="EC" id="2.3.1.275"/>
    </reaction>
</comment>
<comment type="pathway">
    <text evidence="1">Lipid metabolism; phospholipid metabolism.</text>
</comment>
<comment type="subunit">
    <text evidence="1">Probably interacts with PlsX.</text>
</comment>
<comment type="subcellular location">
    <subcellularLocation>
        <location evidence="1">Cell membrane</location>
        <topology evidence="1">Multi-pass membrane protein</topology>
    </subcellularLocation>
</comment>
<comment type="similarity">
    <text evidence="1">Belongs to the PlsY family.</text>
</comment>
<organism>
    <name type="scientific">Streptococcus pyogenes serotype M18 (strain MGAS8232)</name>
    <dbReference type="NCBI Taxonomy" id="186103"/>
    <lineage>
        <taxon>Bacteria</taxon>
        <taxon>Bacillati</taxon>
        <taxon>Bacillota</taxon>
        <taxon>Bacilli</taxon>
        <taxon>Lactobacillales</taxon>
        <taxon>Streptococcaceae</taxon>
        <taxon>Streptococcus</taxon>
    </lineage>
</organism>
<evidence type="ECO:0000255" key="1">
    <source>
        <dbReference type="HAMAP-Rule" id="MF_01043"/>
    </source>
</evidence>
<dbReference type="EC" id="2.3.1.275" evidence="1"/>
<dbReference type="EMBL" id="AE009949">
    <property type="protein sequence ID" value="AAL97607.1"/>
    <property type="molecule type" value="Genomic_DNA"/>
</dbReference>
<dbReference type="RefSeq" id="WP_002984911.1">
    <property type="nucleotide sequence ID" value="NC_003485.1"/>
</dbReference>
<dbReference type="SMR" id="P67170"/>
<dbReference type="GeneID" id="69900991"/>
<dbReference type="KEGG" id="spm:spyM18_0966"/>
<dbReference type="HOGENOM" id="CLU_081254_3_0_9"/>
<dbReference type="UniPathway" id="UPA00085"/>
<dbReference type="GO" id="GO:0005886">
    <property type="term" value="C:plasma membrane"/>
    <property type="evidence" value="ECO:0007669"/>
    <property type="project" value="UniProtKB-SubCell"/>
</dbReference>
<dbReference type="GO" id="GO:0043772">
    <property type="term" value="F:acyl-phosphate glycerol-3-phosphate acyltransferase activity"/>
    <property type="evidence" value="ECO:0007669"/>
    <property type="project" value="UniProtKB-UniRule"/>
</dbReference>
<dbReference type="GO" id="GO:0008654">
    <property type="term" value="P:phospholipid biosynthetic process"/>
    <property type="evidence" value="ECO:0007669"/>
    <property type="project" value="UniProtKB-UniRule"/>
</dbReference>
<dbReference type="HAMAP" id="MF_01043">
    <property type="entry name" value="PlsY"/>
    <property type="match status" value="1"/>
</dbReference>
<dbReference type="InterPro" id="IPR003811">
    <property type="entry name" value="G3P_acylTferase_PlsY"/>
</dbReference>
<dbReference type="NCBIfam" id="TIGR00023">
    <property type="entry name" value="glycerol-3-phosphate 1-O-acyltransferase PlsY"/>
    <property type="match status" value="1"/>
</dbReference>
<dbReference type="PANTHER" id="PTHR30309:SF0">
    <property type="entry name" value="GLYCEROL-3-PHOSPHATE ACYLTRANSFERASE-RELATED"/>
    <property type="match status" value="1"/>
</dbReference>
<dbReference type="PANTHER" id="PTHR30309">
    <property type="entry name" value="INNER MEMBRANE PROTEIN YGIH"/>
    <property type="match status" value="1"/>
</dbReference>
<dbReference type="Pfam" id="PF02660">
    <property type="entry name" value="G3P_acyltransf"/>
    <property type="match status" value="1"/>
</dbReference>
<dbReference type="SMART" id="SM01207">
    <property type="entry name" value="G3P_acyltransf"/>
    <property type="match status" value="1"/>
</dbReference>
<reference key="1">
    <citation type="journal article" date="2002" name="Proc. Natl. Acad. Sci. U.S.A.">
        <title>Genome sequence and comparative microarray analysis of serotype M18 group A Streptococcus strains associated with acute rheumatic fever outbreaks.</title>
        <authorList>
            <person name="Smoot J.C."/>
            <person name="Barbian K.D."/>
            <person name="Van Gompel J.J."/>
            <person name="Smoot L.M."/>
            <person name="Chaussee M.S."/>
            <person name="Sylva G.L."/>
            <person name="Sturdevant D.E."/>
            <person name="Ricklefs S.M."/>
            <person name="Porcella S.F."/>
            <person name="Parkins L.D."/>
            <person name="Beres S.B."/>
            <person name="Campbell D.S."/>
            <person name="Smith T.M."/>
            <person name="Zhang Q."/>
            <person name="Kapur V."/>
            <person name="Daly J.A."/>
            <person name="Veasy L.G."/>
            <person name="Musser J.M."/>
        </authorList>
    </citation>
    <scope>NUCLEOTIDE SEQUENCE [LARGE SCALE GENOMIC DNA]</scope>
    <source>
        <strain>MGAS8232</strain>
    </source>
</reference>